<dbReference type="EMBL" id="CP000736">
    <property type="protein sequence ID" value="ABR52552.1"/>
    <property type="molecule type" value="Genomic_DNA"/>
</dbReference>
<dbReference type="KEGG" id="sah:SaurJH1_1706"/>
<dbReference type="HOGENOM" id="CLU_146610_2_1_9"/>
<dbReference type="HAMAP" id="MF_01448">
    <property type="entry name" value="UPF0473"/>
    <property type="match status" value="1"/>
</dbReference>
<dbReference type="InterPro" id="IPR009711">
    <property type="entry name" value="UPF0473"/>
</dbReference>
<dbReference type="NCBIfam" id="NF010214">
    <property type="entry name" value="PRK13678.1-1"/>
    <property type="match status" value="1"/>
</dbReference>
<dbReference type="PANTHER" id="PTHR40066">
    <property type="entry name" value="UPF0473 PROTEIN CBO2561/CLC_2432"/>
    <property type="match status" value="1"/>
</dbReference>
<dbReference type="PANTHER" id="PTHR40066:SF1">
    <property type="entry name" value="UPF0473 PROTEIN CBO2561_CLC_2432"/>
    <property type="match status" value="1"/>
</dbReference>
<dbReference type="Pfam" id="PF06949">
    <property type="entry name" value="DUF1292"/>
    <property type="match status" value="1"/>
</dbReference>
<protein>
    <recommendedName>
        <fullName evidence="1">UPF0473 protein SaurJH1_1706</fullName>
    </recommendedName>
</protein>
<reference key="1">
    <citation type="submission" date="2007-06" db="EMBL/GenBank/DDBJ databases">
        <title>Complete sequence of chromosome of Staphylococcus aureus subsp. aureus JH1.</title>
        <authorList>
            <consortium name="US DOE Joint Genome Institute"/>
            <person name="Copeland A."/>
            <person name="Lucas S."/>
            <person name="Lapidus A."/>
            <person name="Barry K."/>
            <person name="Detter J.C."/>
            <person name="Glavina del Rio T."/>
            <person name="Hammon N."/>
            <person name="Israni S."/>
            <person name="Dalin E."/>
            <person name="Tice H."/>
            <person name="Pitluck S."/>
            <person name="Chain P."/>
            <person name="Malfatti S."/>
            <person name="Shin M."/>
            <person name="Vergez L."/>
            <person name="Schmutz J."/>
            <person name="Larimer F."/>
            <person name="Land M."/>
            <person name="Hauser L."/>
            <person name="Kyrpides N."/>
            <person name="Ivanova N."/>
            <person name="Tomasz A."/>
            <person name="Richardson P."/>
        </authorList>
    </citation>
    <scope>NUCLEOTIDE SEQUENCE [LARGE SCALE GENOMIC DNA]</scope>
    <source>
        <strain>JH1</strain>
    </source>
</reference>
<evidence type="ECO:0000255" key="1">
    <source>
        <dbReference type="HAMAP-Rule" id="MF_01448"/>
    </source>
</evidence>
<accession>A6U284</accession>
<gene>
    <name type="ordered locus">SaurJH1_1706</name>
</gene>
<comment type="similarity">
    <text evidence="1">Belongs to the UPF0473 family.</text>
</comment>
<organism>
    <name type="scientific">Staphylococcus aureus (strain JH1)</name>
    <dbReference type="NCBI Taxonomy" id="359787"/>
    <lineage>
        <taxon>Bacteria</taxon>
        <taxon>Bacillati</taxon>
        <taxon>Bacillota</taxon>
        <taxon>Bacilli</taxon>
        <taxon>Bacillales</taxon>
        <taxon>Staphylococcaceae</taxon>
        <taxon>Staphylococcus</taxon>
    </lineage>
</organism>
<name>Y1706_STAA2</name>
<sequence>MTEHNHDSQLEINNEEELLTLFDEEGNEVLYRKVLEFYHPEFKKEYVILAEEGAQSDEDDMIELVPMINEPDESGDGGKLVPIETDEEWDMIEEVVNTEMEE</sequence>
<proteinExistence type="inferred from homology"/>
<feature type="chain" id="PRO_1000087504" description="UPF0473 protein SaurJH1_1706">
    <location>
        <begin position="1"/>
        <end position="102"/>
    </location>
</feature>